<organism>
    <name type="scientific">Pasteurella multocida (strain Pm70)</name>
    <dbReference type="NCBI Taxonomy" id="272843"/>
    <lineage>
        <taxon>Bacteria</taxon>
        <taxon>Pseudomonadati</taxon>
        <taxon>Pseudomonadota</taxon>
        <taxon>Gammaproteobacteria</taxon>
        <taxon>Pasteurellales</taxon>
        <taxon>Pasteurellaceae</taxon>
        <taxon>Pasteurella</taxon>
    </lineage>
</organism>
<protein>
    <recommendedName>
        <fullName evidence="1">Glutamate 5-kinase</fullName>
        <ecNumber evidence="1">2.7.2.11</ecNumber>
    </recommendedName>
    <alternativeName>
        <fullName evidence="1">Gamma-glutamyl kinase</fullName>
        <shortName evidence="1">GK</shortName>
    </alternativeName>
</protein>
<comment type="function">
    <text evidence="1">Catalyzes the transfer of a phosphate group to glutamate to form L-glutamate 5-phosphate.</text>
</comment>
<comment type="catalytic activity">
    <reaction evidence="1">
        <text>L-glutamate + ATP = L-glutamyl 5-phosphate + ADP</text>
        <dbReference type="Rhea" id="RHEA:14877"/>
        <dbReference type="ChEBI" id="CHEBI:29985"/>
        <dbReference type="ChEBI" id="CHEBI:30616"/>
        <dbReference type="ChEBI" id="CHEBI:58274"/>
        <dbReference type="ChEBI" id="CHEBI:456216"/>
        <dbReference type="EC" id="2.7.2.11"/>
    </reaction>
</comment>
<comment type="pathway">
    <text evidence="1">Amino-acid biosynthesis; L-proline biosynthesis; L-glutamate 5-semialdehyde from L-glutamate: step 1/2.</text>
</comment>
<comment type="subcellular location">
    <subcellularLocation>
        <location evidence="1">Cytoplasm</location>
    </subcellularLocation>
</comment>
<comment type="similarity">
    <text evidence="1">Belongs to the glutamate 5-kinase family.</text>
</comment>
<comment type="sequence caution" evidence="2">
    <conflict type="erroneous initiation">
        <sequence resource="EMBL-CDS" id="AAK03980"/>
    </conflict>
</comment>
<accession>Q9CJU5</accession>
<keyword id="KW-0028">Amino-acid biosynthesis</keyword>
<keyword id="KW-0067">ATP-binding</keyword>
<keyword id="KW-0963">Cytoplasm</keyword>
<keyword id="KW-0418">Kinase</keyword>
<keyword id="KW-0547">Nucleotide-binding</keyword>
<keyword id="KW-0641">Proline biosynthesis</keyword>
<keyword id="KW-1185">Reference proteome</keyword>
<keyword id="KW-0808">Transferase</keyword>
<proteinExistence type="inferred from homology"/>
<reference key="1">
    <citation type="journal article" date="2001" name="Proc. Natl. Acad. Sci. U.S.A.">
        <title>Complete genomic sequence of Pasteurella multocida Pm70.</title>
        <authorList>
            <person name="May B.J."/>
            <person name="Zhang Q."/>
            <person name="Li L.L."/>
            <person name="Paustian M.L."/>
            <person name="Whittam T.S."/>
            <person name="Kapur V."/>
        </authorList>
    </citation>
    <scope>NUCLEOTIDE SEQUENCE [LARGE SCALE GENOMIC DNA]</scope>
    <source>
        <strain>Pm70</strain>
    </source>
</reference>
<evidence type="ECO:0000255" key="1">
    <source>
        <dbReference type="HAMAP-Rule" id="MF_00456"/>
    </source>
</evidence>
<evidence type="ECO:0000305" key="2"/>
<feature type="chain" id="PRO_0000109702" description="Glutamate 5-kinase">
    <location>
        <begin position="1"/>
        <end position="367"/>
    </location>
</feature>
<feature type="domain" description="PUA" evidence="1">
    <location>
        <begin position="275"/>
        <end position="353"/>
    </location>
</feature>
<feature type="binding site" evidence="1">
    <location>
        <position position="10"/>
    </location>
    <ligand>
        <name>ATP</name>
        <dbReference type="ChEBI" id="CHEBI:30616"/>
    </ligand>
</feature>
<feature type="binding site" evidence="1">
    <location>
        <position position="50"/>
    </location>
    <ligand>
        <name>substrate</name>
    </ligand>
</feature>
<feature type="binding site" evidence="1">
    <location>
        <position position="137"/>
    </location>
    <ligand>
        <name>substrate</name>
    </ligand>
</feature>
<feature type="binding site" evidence="1">
    <location>
        <position position="149"/>
    </location>
    <ligand>
        <name>substrate</name>
    </ligand>
</feature>
<feature type="binding site" evidence="1">
    <location>
        <begin position="169"/>
        <end position="170"/>
    </location>
    <ligand>
        <name>ATP</name>
        <dbReference type="ChEBI" id="CHEBI:30616"/>
    </ligand>
</feature>
<feature type="binding site" evidence="1">
    <location>
        <begin position="211"/>
        <end position="217"/>
    </location>
    <ligand>
        <name>ATP</name>
        <dbReference type="ChEBI" id="CHEBI:30616"/>
    </ligand>
</feature>
<sequence length="367" mass="39895">MKIDKTLVVKFGTSTLTQGSAKLNLPHMMDIVRQLAQLHQAGFRLVIVTSGAIAAGRHYLNHPQLPPTIASKQLLAAVGQSQLIQTWEKLFAIYDIHIGQILLTRADIEDRERFLNARDTLRALLDNQIIPVINENDAVATSEIKVGDNDNLSALVAILVQAEQLYLLTDQQGLFDRDPRKHPDAKLIADVDKITDHIRAIAGGSGTSLGTGGMSTKISAADVATRSGIETIIAPGNRPNVIVDLAYGQAIGTKFSVQADRLESRKQWLYAAPSAGIITIDAGAENAMLMQHKSLLPAGIVNVEGRFSRGEVVKIRTQQGKDVALGMPRYNSDALHLIQGKHSQDIEQVLGYEYGAVAVHRDDMIVL</sequence>
<gene>
    <name evidence="1" type="primary">proB</name>
    <name type="ordered locus">PM1896</name>
</gene>
<dbReference type="EC" id="2.7.2.11" evidence="1"/>
<dbReference type="EMBL" id="AE004439">
    <property type="protein sequence ID" value="AAK03980.1"/>
    <property type="status" value="ALT_INIT"/>
    <property type="molecule type" value="Genomic_DNA"/>
</dbReference>
<dbReference type="RefSeq" id="WP_005724984.1">
    <property type="nucleotide sequence ID" value="NC_002663.1"/>
</dbReference>
<dbReference type="SMR" id="Q9CJU5"/>
<dbReference type="STRING" id="272843.PM1896"/>
<dbReference type="EnsemblBacteria" id="AAK03980">
    <property type="protein sequence ID" value="AAK03980"/>
    <property type="gene ID" value="PM1896"/>
</dbReference>
<dbReference type="KEGG" id="pmu:PM1896"/>
<dbReference type="PATRIC" id="fig|272843.6.peg.1918"/>
<dbReference type="HOGENOM" id="CLU_025400_2_0_6"/>
<dbReference type="OrthoDB" id="9804434at2"/>
<dbReference type="UniPathway" id="UPA00098">
    <property type="reaction ID" value="UER00359"/>
</dbReference>
<dbReference type="Proteomes" id="UP000000809">
    <property type="component" value="Chromosome"/>
</dbReference>
<dbReference type="GO" id="GO:0005829">
    <property type="term" value="C:cytosol"/>
    <property type="evidence" value="ECO:0007669"/>
    <property type="project" value="TreeGrafter"/>
</dbReference>
<dbReference type="GO" id="GO:0005524">
    <property type="term" value="F:ATP binding"/>
    <property type="evidence" value="ECO:0007669"/>
    <property type="project" value="UniProtKB-KW"/>
</dbReference>
<dbReference type="GO" id="GO:0004349">
    <property type="term" value="F:glutamate 5-kinase activity"/>
    <property type="evidence" value="ECO:0007669"/>
    <property type="project" value="UniProtKB-UniRule"/>
</dbReference>
<dbReference type="GO" id="GO:0003723">
    <property type="term" value="F:RNA binding"/>
    <property type="evidence" value="ECO:0007669"/>
    <property type="project" value="InterPro"/>
</dbReference>
<dbReference type="GO" id="GO:0055129">
    <property type="term" value="P:L-proline biosynthetic process"/>
    <property type="evidence" value="ECO:0007669"/>
    <property type="project" value="UniProtKB-UniRule"/>
</dbReference>
<dbReference type="CDD" id="cd04242">
    <property type="entry name" value="AAK_G5K_ProB"/>
    <property type="match status" value="1"/>
</dbReference>
<dbReference type="CDD" id="cd21157">
    <property type="entry name" value="PUA_G5K"/>
    <property type="match status" value="1"/>
</dbReference>
<dbReference type="FunFam" id="2.30.130.10:FF:000003">
    <property type="entry name" value="Glutamate 5-kinase"/>
    <property type="match status" value="1"/>
</dbReference>
<dbReference type="FunFam" id="3.40.1160.10:FF:000006">
    <property type="entry name" value="Glutamate 5-kinase"/>
    <property type="match status" value="1"/>
</dbReference>
<dbReference type="Gene3D" id="3.40.1160.10">
    <property type="entry name" value="Acetylglutamate kinase-like"/>
    <property type="match status" value="2"/>
</dbReference>
<dbReference type="Gene3D" id="2.30.130.10">
    <property type="entry name" value="PUA domain"/>
    <property type="match status" value="1"/>
</dbReference>
<dbReference type="HAMAP" id="MF_00456">
    <property type="entry name" value="ProB"/>
    <property type="match status" value="1"/>
</dbReference>
<dbReference type="InterPro" id="IPR036393">
    <property type="entry name" value="AceGlu_kinase-like_sf"/>
</dbReference>
<dbReference type="InterPro" id="IPR001048">
    <property type="entry name" value="Asp/Glu/Uridylate_kinase"/>
</dbReference>
<dbReference type="InterPro" id="IPR041739">
    <property type="entry name" value="G5K_ProB"/>
</dbReference>
<dbReference type="InterPro" id="IPR001057">
    <property type="entry name" value="Glu/AcGlu_kinase"/>
</dbReference>
<dbReference type="InterPro" id="IPR011529">
    <property type="entry name" value="Glu_5kinase"/>
</dbReference>
<dbReference type="InterPro" id="IPR005715">
    <property type="entry name" value="Glu_5kinase/COase_Synthase"/>
</dbReference>
<dbReference type="InterPro" id="IPR019797">
    <property type="entry name" value="Glutamate_5-kinase_CS"/>
</dbReference>
<dbReference type="InterPro" id="IPR002478">
    <property type="entry name" value="PUA"/>
</dbReference>
<dbReference type="InterPro" id="IPR015947">
    <property type="entry name" value="PUA-like_sf"/>
</dbReference>
<dbReference type="InterPro" id="IPR036974">
    <property type="entry name" value="PUA_sf"/>
</dbReference>
<dbReference type="NCBIfam" id="TIGR01027">
    <property type="entry name" value="proB"/>
    <property type="match status" value="1"/>
</dbReference>
<dbReference type="PANTHER" id="PTHR43654">
    <property type="entry name" value="GLUTAMATE 5-KINASE"/>
    <property type="match status" value="1"/>
</dbReference>
<dbReference type="PANTHER" id="PTHR43654:SF1">
    <property type="entry name" value="ISOPENTENYL PHOSPHATE KINASE"/>
    <property type="match status" value="1"/>
</dbReference>
<dbReference type="Pfam" id="PF00696">
    <property type="entry name" value="AA_kinase"/>
    <property type="match status" value="1"/>
</dbReference>
<dbReference type="Pfam" id="PF01472">
    <property type="entry name" value="PUA"/>
    <property type="match status" value="1"/>
</dbReference>
<dbReference type="PIRSF" id="PIRSF000729">
    <property type="entry name" value="GK"/>
    <property type="match status" value="1"/>
</dbReference>
<dbReference type="PRINTS" id="PR00474">
    <property type="entry name" value="GLU5KINASE"/>
</dbReference>
<dbReference type="SMART" id="SM00359">
    <property type="entry name" value="PUA"/>
    <property type="match status" value="1"/>
</dbReference>
<dbReference type="SUPFAM" id="SSF53633">
    <property type="entry name" value="Carbamate kinase-like"/>
    <property type="match status" value="1"/>
</dbReference>
<dbReference type="SUPFAM" id="SSF88697">
    <property type="entry name" value="PUA domain-like"/>
    <property type="match status" value="1"/>
</dbReference>
<dbReference type="PROSITE" id="PS00902">
    <property type="entry name" value="GLUTAMATE_5_KINASE"/>
    <property type="match status" value="1"/>
</dbReference>
<dbReference type="PROSITE" id="PS50890">
    <property type="entry name" value="PUA"/>
    <property type="match status" value="1"/>
</dbReference>
<name>PROB_PASMU</name>